<feature type="chain" id="PRO_0000388036" description="Structure-specific endonuclease subunit SLX4">
    <location>
        <begin position="1"/>
        <end position="864"/>
    </location>
</feature>
<feature type="region of interest" description="Disordered" evidence="2">
    <location>
        <begin position="35"/>
        <end position="72"/>
    </location>
</feature>
<feature type="region of interest" description="Disordered" evidence="2">
    <location>
        <begin position="89"/>
        <end position="113"/>
    </location>
</feature>
<feature type="region of interest" description="Disordered" evidence="2">
    <location>
        <begin position="160"/>
        <end position="193"/>
    </location>
</feature>
<feature type="region of interest" description="Disordered" evidence="2">
    <location>
        <begin position="288"/>
        <end position="318"/>
    </location>
</feature>
<feature type="region of interest" description="Disordered" evidence="2">
    <location>
        <begin position="348"/>
        <end position="382"/>
    </location>
</feature>
<feature type="region of interest" description="Disordered" evidence="2">
    <location>
        <begin position="413"/>
        <end position="432"/>
    </location>
</feature>
<feature type="region of interest" description="Disordered" evidence="2">
    <location>
        <begin position="625"/>
        <end position="771"/>
    </location>
</feature>
<feature type="compositionally biased region" description="Low complexity" evidence="2">
    <location>
        <begin position="35"/>
        <end position="54"/>
    </location>
</feature>
<feature type="compositionally biased region" description="Basic and acidic residues" evidence="2">
    <location>
        <begin position="58"/>
        <end position="72"/>
    </location>
</feature>
<feature type="compositionally biased region" description="Polar residues" evidence="2">
    <location>
        <begin position="160"/>
        <end position="169"/>
    </location>
</feature>
<feature type="compositionally biased region" description="Polar residues" evidence="2">
    <location>
        <begin position="289"/>
        <end position="306"/>
    </location>
</feature>
<feature type="compositionally biased region" description="Basic residues" evidence="2">
    <location>
        <begin position="307"/>
        <end position="317"/>
    </location>
</feature>
<feature type="compositionally biased region" description="Polar residues" evidence="2">
    <location>
        <begin position="659"/>
        <end position="668"/>
    </location>
</feature>
<feature type="compositionally biased region" description="Low complexity" evidence="2">
    <location>
        <begin position="683"/>
        <end position="695"/>
    </location>
</feature>
<feature type="compositionally biased region" description="Polar residues" evidence="2">
    <location>
        <begin position="743"/>
        <end position="771"/>
    </location>
</feature>
<keyword id="KW-0227">DNA damage</keyword>
<keyword id="KW-0233">DNA recombination</keyword>
<keyword id="KW-0234">DNA repair</keyword>
<keyword id="KW-0539">Nucleus</keyword>
<keyword id="KW-0597">Phosphoprotein</keyword>
<evidence type="ECO:0000255" key="1">
    <source>
        <dbReference type="HAMAP-Rule" id="MF_03110"/>
    </source>
</evidence>
<evidence type="ECO:0000256" key="2">
    <source>
        <dbReference type="SAM" id="MobiDB-lite"/>
    </source>
</evidence>
<sequence>MTRQLSSDGRMFASSIITVIPDSSPTAAEAIELSSPLSLPSPTSLLDFLSTSTSRGPARSDTDGDKTQGKEVLDTRPILENSFRRENRVVSGTGGKAATGKKLKRRTESPGNACQSEIHIVPGERIILRQTRPDKKAAKTKRTKKEDGLMNRKLYGRVSKANQTVSLQPETKKSAPKGCNDTTQPAENGHINDLDDGLQLEQAIQRRLDWTPTKDTTIPVIDLVGDSPSSCEKSLSGMRSTRTMLSNYEFSGIVGTLGGSRSEGTPDAPTTKRPVELLKVNNLKEISGLSDSRQSSITEDSESATSKPRRVKAKNPPKSKLTTITSYATAKYTVVEKSVDLDPVETLLSDEPGKEKNVAKRTSGARYAKPGRKKSATTEKKNEPPIFKVVPPLEAFKAFDGQELLFGTSSQLANGHSEDQHEQNEGTSHISNSSAFIPLSRSESSSKAPSQTSLGSGFLKLSSSKNLWSAGARDLTGAVLEIDEIDLSEHWMKPSIFESQPKAPLGCKADTQIPPQLGEIDFDNSCQKPLAAIDPPELVTQSETPSEKGDLHKYIVKPTHINSCSQSGSSISVGSPEKPVQDKPIFSGFTTSELAKKVAAYGFKPIKSRDKMIALLEKCWENRNKTSNSVPKLTPGDRLSQVDESTQGQSLGPHLKPNSIPQTATTQVPKVKPDKRDTKSQGVPVPSRRSTSTSKVSRKRTESPSAILVDDDQRSDSTGDSVPPSRPRRPSKSCTPRDRQKTPESFNLPTTPLTIRSGKIPSTGTASETLPSLSTQITAAIKAQPRLRAFNGVKQPTWYEKILMYDPIQLEDLAVWLNTDGFERIGEDREVCPGLVREWCESKGVCCIWRKQRGVRAHCPLVRA</sequence>
<accession>C0S0E2</accession>
<dbReference type="EMBL" id="KN305532">
    <property type="protein sequence ID" value="EEH18738.1"/>
    <property type="molecule type" value="Genomic_DNA"/>
</dbReference>
<dbReference type="SMR" id="C0S0E2"/>
<dbReference type="VEuPathDB" id="FungiDB:PABG_01057"/>
<dbReference type="HOGENOM" id="CLU_016773_0_0_1"/>
<dbReference type="OrthoDB" id="6134at33183"/>
<dbReference type="GO" id="GO:0033557">
    <property type="term" value="C:Slx1-Slx4 complex"/>
    <property type="evidence" value="ECO:0007669"/>
    <property type="project" value="UniProtKB-UniRule"/>
</dbReference>
<dbReference type="GO" id="GO:0017108">
    <property type="term" value="F:5'-flap endonuclease activity"/>
    <property type="evidence" value="ECO:0007669"/>
    <property type="project" value="InterPro"/>
</dbReference>
<dbReference type="GO" id="GO:0006310">
    <property type="term" value="P:DNA recombination"/>
    <property type="evidence" value="ECO:0007669"/>
    <property type="project" value="UniProtKB-UniRule"/>
</dbReference>
<dbReference type="GO" id="GO:0006281">
    <property type="term" value="P:DNA repair"/>
    <property type="evidence" value="ECO:0007669"/>
    <property type="project" value="UniProtKB-UniRule"/>
</dbReference>
<dbReference type="GO" id="GO:0006260">
    <property type="term" value="P:DNA replication"/>
    <property type="evidence" value="ECO:0007669"/>
    <property type="project" value="InterPro"/>
</dbReference>
<dbReference type="CDD" id="cd22999">
    <property type="entry name" value="SAP_SLX4"/>
    <property type="match status" value="1"/>
</dbReference>
<dbReference type="HAMAP" id="MF_03110">
    <property type="entry name" value="Endonuc_su_Slx4"/>
    <property type="match status" value="1"/>
</dbReference>
<dbReference type="InterPro" id="IPR027784">
    <property type="entry name" value="Slx4_ascomycetes"/>
</dbReference>
<dbReference type="InterPro" id="IPR018574">
    <property type="entry name" value="Structure-sp_endonuc_su_Slx4"/>
</dbReference>
<dbReference type="Pfam" id="PF09494">
    <property type="entry name" value="Slx4"/>
    <property type="match status" value="1"/>
</dbReference>
<organism>
    <name type="scientific">Paracoccidioides brasiliensis (strain Pb03)</name>
    <dbReference type="NCBI Taxonomy" id="482561"/>
    <lineage>
        <taxon>Eukaryota</taxon>
        <taxon>Fungi</taxon>
        <taxon>Dikarya</taxon>
        <taxon>Ascomycota</taxon>
        <taxon>Pezizomycotina</taxon>
        <taxon>Eurotiomycetes</taxon>
        <taxon>Eurotiomycetidae</taxon>
        <taxon>Onygenales</taxon>
        <taxon>Ajellomycetaceae</taxon>
        <taxon>Paracoccidioides</taxon>
    </lineage>
</organism>
<protein>
    <recommendedName>
        <fullName evidence="1">Structure-specific endonuclease subunit SLX4</fullName>
    </recommendedName>
</protein>
<name>SLX4_PARBP</name>
<reference key="1">
    <citation type="journal article" date="2011" name="PLoS Genet.">
        <title>Comparative genomic analysis of human fungal pathogens causing paracoccidioidomycosis.</title>
        <authorList>
            <person name="Desjardins C.A."/>
            <person name="Champion M.D."/>
            <person name="Holder J.W."/>
            <person name="Muszewska A."/>
            <person name="Goldberg J."/>
            <person name="Bailao A.M."/>
            <person name="Brigido M.M."/>
            <person name="Ferreira M.E."/>
            <person name="Garcia A.M."/>
            <person name="Grynberg M."/>
            <person name="Gujja S."/>
            <person name="Heiman D.I."/>
            <person name="Henn M.R."/>
            <person name="Kodira C.D."/>
            <person name="Leon-Narvaez H."/>
            <person name="Longo L.V.G."/>
            <person name="Ma L.-J."/>
            <person name="Malavazi I."/>
            <person name="Matsuo A.L."/>
            <person name="Morais F.V."/>
            <person name="Pereira M."/>
            <person name="Rodriguez-Brito S."/>
            <person name="Sakthikumar S."/>
            <person name="Salem-Izacc S.M."/>
            <person name="Sykes S.M."/>
            <person name="Teixeira M.M."/>
            <person name="Vallejo M.C."/>
            <person name="Walter M.E."/>
            <person name="Yandava C."/>
            <person name="Young S."/>
            <person name="Zeng Q."/>
            <person name="Zucker J."/>
            <person name="Felipe M.S."/>
            <person name="Goldman G.H."/>
            <person name="Haas B.J."/>
            <person name="McEwen J.G."/>
            <person name="Nino-Vega G."/>
            <person name="Puccia R."/>
            <person name="San-Blas G."/>
            <person name="Soares C.M."/>
            <person name="Birren B.W."/>
            <person name="Cuomo C.A."/>
        </authorList>
    </citation>
    <scope>NUCLEOTIDE SEQUENCE [LARGE SCALE GENOMIC DNA]</scope>
    <source>
        <strain>Pb03</strain>
    </source>
</reference>
<gene>
    <name evidence="1" type="primary">SLX4</name>
    <name type="ORF">PABG_01057</name>
</gene>
<comment type="function">
    <text evidence="1">Regulatory subunit of the SLX1-SLX4 structure-specific endonuclease that resolves DNA secondary structures generated during DNA repair and recombination. Has endonuclease activity towards branched DNA substrates, introducing single-strand cuts in duplex DNA close to junctions with ss-DNA.</text>
</comment>
<comment type="subunit">
    <text evidence="1">Forms a heterodimer with SLX1.</text>
</comment>
<comment type="subcellular location">
    <subcellularLocation>
        <location evidence="1">Nucleus</location>
    </subcellularLocation>
</comment>
<comment type="PTM">
    <text evidence="1">Phosphorylated in response to DNA damage.</text>
</comment>
<comment type="similarity">
    <text evidence="1">Belongs to the SLX4 family.</text>
</comment>
<proteinExistence type="inferred from homology"/>